<organismHost>
    <name type="scientific">Homo sapiens</name>
    <name type="common">Human</name>
    <dbReference type="NCBI Taxonomy" id="9606"/>
</organismHost>
<reference key="1">
    <citation type="journal article" date="1988" name="J. Gen. Virol.">
        <title>The complete DNA sequence of the long unique region in the genome of herpes simplex virus type 1.</title>
        <authorList>
            <person name="McGeoch D.J."/>
            <person name="Dalrymple M.A."/>
            <person name="Davison A.J."/>
            <person name="Dolan A."/>
            <person name="Frame M.C."/>
            <person name="McNab D."/>
            <person name="Perry L.J."/>
            <person name="Scott J.E."/>
            <person name="Taylor P."/>
        </authorList>
    </citation>
    <scope>NUCLEOTIDE SEQUENCE [LARGE SCALE GENOMIC DNA]</scope>
    <source>
        <strain>17</strain>
    </source>
</reference>
<reference key="2">
    <citation type="journal article" date="2011" name="Ann. N. Y. Acad. Sci.">
        <title>Evolution of sexually transmitted and sexually transmissible human herpesviruses.</title>
        <authorList>
            <person name="Davison A.J."/>
        </authorList>
    </citation>
    <scope>NUCLEOTIDE SEQUENCE [LARGE SCALE GENOMIC DNA]</scope>
    <source>
        <strain>17</strain>
    </source>
</reference>
<reference key="3">
    <citation type="submission" date="2019-07" db="EMBL/GenBank/DDBJ databases">
        <title>Genetic and phenotypic intrastrain variation in herpes simplex virus type 1 Glasgow strain 17 syn+ derived viruses.</title>
        <authorList>
            <person name="Jones J."/>
            <person name="Depledge D."/>
            <person name="Breuer J."/>
            <person name="Ebert-Keel K."/>
            <person name="Elliott G."/>
        </authorList>
    </citation>
    <scope>NUCLEOTIDE SEQUENCE</scope>
    <source>
        <strain>Isolate S17pp</strain>
        <strain>Isolate S17pp22a</strain>
        <strain>Isolate S17pp3</strain>
        <strain>Isolate S17pp4</strain>
        <strain>Isolate S17pp5</strain>
        <strain>Isolate S17pp8</strain>
    </source>
</reference>
<reference key="4">
    <citation type="journal article" date="2020" name="Nat. Commun.">
        <title>Integrative functional genomics decodes herpes simplex virus 1.</title>
        <authorList>
            <person name="Whisnant A.W."/>
            <person name="Jurges C.S."/>
            <person name="Hennig T."/>
            <person name="Wyler E."/>
            <person name="Prusty B."/>
            <person name="Rutkowski A.J."/>
            <person name="L'hernault A."/>
            <person name="Djakovic L."/>
            <person name="Gobel M."/>
            <person name="Doring K."/>
            <person name="Menegatti J."/>
            <person name="Antrobus R."/>
            <person name="Matheson N.J."/>
            <person name="Kunzig F.W.H."/>
            <person name="Mastrobuoni G."/>
            <person name="Bielow C."/>
            <person name="Kempa S."/>
            <person name="Liang C."/>
            <person name="Dandekar T."/>
            <person name="Zimmer R."/>
            <person name="Landthaler M."/>
            <person name="Grasser F."/>
            <person name="Lehner P.J."/>
            <person name="Friedel C.C."/>
            <person name="Erhard F."/>
            <person name="Dolken L."/>
        </authorList>
    </citation>
    <scope>NUCLEOTIDE SEQUENCE</scope>
    <source>
        <strain>17</strain>
    </source>
</reference>
<reference key="5">
    <citation type="journal article" date="1995" name="FEBS Lett.">
        <title>The three-dimensional structure of thymidine kinase from herpes simplex virus type 1.</title>
        <authorList>
            <person name="Wild K."/>
            <person name="Bohner T."/>
            <person name="Aubry A."/>
            <person name="Folkers G."/>
            <person name="Schulz G.E."/>
        </authorList>
    </citation>
    <scope>X-RAY CRYSTALLOGRAPHY (3.0 ANGSTROMS) OF 34-376</scope>
</reference>
<reference key="6">
    <citation type="journal article" date="1995" name="Nat. Struct. Biol.">
        <title>Crystal structures of the thymidine kinase from herpes simplex virus type-1 in complex with deoxythymidine and ganciclovir.</title>
        <authorList>
            <person name="Brown D.G."/>
            <person name="Visse R."/>
            <person name="Sandhu G."/>
            <person name="Davies A."/>
            <person name="Rizkallah P.J."/>
            <person name="Melitz C."/>
            <person name="Summers W.C."/>
            <person name="Sanderson M.R."/>
        </authorList>
    </citation>
    <scope>X-RAY CRYSTALLOGRAPHY (2.0 ANGSTROMS)</scope>
</reference>
<reference key="7">
    <citation type="journal article" date="1997" name="Protein Sci.">
        <title>The structures of thymidine kinase from herpes simplex virus type 1 in complex with substrates and a substrate analogue.</title>
        <authorList>
            <person name="Wild K."/>
            <person name="Bohner T."/>
            <person name="Folkers G."/>
            <person name="Schulz G.E."/>
        </authorList>
    </citation>
    <scope>X-RAY CRYSTALLOGRAPHY (2.75 ANGSTROMS) OF 34-376</scope>
</reference>
<reference key="8">
    <citation type="journal article" date="1998" name="Proteins">
        <title>Exploring the active site of herpes simplex virus type-1 thymidine kinase by X-ray crystallography of complexes with aciclovir and other ligands.</title>
        <authorList>
            <person name="Champness J.N."/>
            <person name="Bennett M.S."/>
            <person name="Wien F."/>
            <person name="Visse R."/>
            <person name="Summers W.C."/>
            <person name="Herdewijn P."/>
            <person name="de Clerq E."/>
            <person name="Ostrowski T."/>
            <person name="Jarvest R.L."/>
            <person name="Sanderson M.R."/>
        </authorList>
    </citation>
    <scope>X-RAY CRYSTALLOGRAPHY (2.2 ANGSTROMS)</scope>
</reference>
<reference key="9">
    <citation type="journal article" date="1999" name="FEBS Lett.">
        <title>Structure to 1.9-A resolution of a complex with herpes simplex virus type-1 thymidine kinase of a novel, non-substrate inhibitor: X-ray crystallographic comparison with binding of aciclovir.</title>
        <authorList>
            <person name="Bennett M.S."/>
            <person name="Wien F."/>
            <person name="Champness J.N."/>
            <person name="Batuwangala T."/>
            <person name="Rutherford T."/>
            <person name="Summers W.C."/>
            <person name="Sun H."/>
            <person name="Wright G."/>
            <person name="Sanderson M.R."/>
        </authorList>
    </citation>
    <scope>X-RAY CRYSTALLOGRAPHY (1.9 ANGSTROMS)</scope>
</reference>
<reference key="10">
    <citation type="journal article" date="2000" name="Proteins">
        <title>Nucleoside binding site of herpes simplex type 1 thymidine kinase analyzed by X-ray crystallography.</title>
        <authorList>
            <person name="Vogt J."/>
            <person name="Perozzo R."/>
            <person name="Pautsch A."/>
            <person name="Prota A."/>
            <person name="Schelling P."/>
            <person name="Pilger B."/>
            <person name="Folkers G."/>
            <person name="Scapozza L."/>
            <person name="Schulz G.E."/>
        </authorList>
    </citation>
    <scope>X-RAY CRYSTALLOGRAPHY (2.0 ANGSTROMS) OF 45-376 IN COMPLEX WITH ADENINE ANALOG</scope>
    <scope>CATALYTIC ACTIVITY</scope>
    <scope>SUBUNIT</scope>
</reference>
<feature type="chain" id="PRO_0000175069" description="Thymidine kinase">
    <location>
        <begin position="1"/>
        <end position="376"/>
    </location>
</feature>
<feature type="region of interest" description="Disordered" evidence="2">
    <location>
        <begin position="1"/>
        <end position="38"/>
    </location>
</feature>
<feature type="compositionally biased region" description="Basic residues" evidence="2">
    <location>
        <begin position="19"/>
        <end position="35"/>
    </location>
</feature>
<feature type="active site" description="Proton acceptor" evidence="1">
    <location>
        <position position="83"/>
    </location>
</feature>
<feature type="binding site" evidence="1">
    <location>
        <begin position="56"/>
        <end position="63"/>
    </location>
    <ligand>
        <name>ATP</name>
        <dbReference type="ChEBI" id="CHEBI:30616"/>
    </ligand>
</feature>
<feature type="binding site" evidence="1">
    <location>
        <position position="101"/>
    </location>
    <ligand>
        <name>substrate</name>
    </ligand>
</feature>
<feature type="binding site" evidence="1">
    <location>
        <position position="125"/>
    </location>
    <ligand>
        <name>substrate</name>
    </ligand>
</feature>
<feature type="binding site" evidence="1">
    <location>
        <position position="216"/>
    </location>
    <ligand>
        <name>ATP</name>
        <dbReference type="ChEBI" id="CHEBI:30616"/>
    </ligand>
</feature>
<feature type="binding site" evidence="1">
    <location>
        <position position="222"/>
    </location>
    <ligand>
        <name>substrate</name>
    </ligand>
</feature>
<feature type="strand" evidence="4">
    <location>
        <begin position="48"/>
        <end position="54"/>
    </location>
</feature>
<feature type="strand" evidence="7">
    <location>
        <begin position="56"/>
        <end position="61"/>
    </location>
</feature>
<feature type="helix" evidence="4">
    <location>
        <begin position="62"/>
        <end position="69"/>
    </location>
</feature>
<feature type="helix" evidence="8">
    <location>
        <begin position="70"/>
        <end position="72"/>
    </location>
</feature>
<feature type="turn" evidence="9">
    <location>
        <begin position="75"/>
        <end position="77"/>
    </location>
</feature>
<feature type="strand" evidence="4">
    <location>
        <begin position="78"/>
        <end position="81"/>
    </location>
</feature>
<feature type="helix" evidence="4">
    <location>
        <begin position="85"/>
        <end position="89"/>
    </location>
</feature>
<feature type="strand" evidence="4">
    <location>
        <begin position="92"/>
        <end position="94"/>
    </location>
</feature>
<feature type="helix" evidence="4">
    <location>
        <begin position="96"/>
        <end position="108"/>
    </location>
</feature>
<feature type="helix" evidence="4">
    <location>
        <begin position="114"/>
        <end position="139"/>
    </location>
</feature>
<feature type="helix" evidence="4">
    <location>
        <begin position="140"/>
        <end position="142"/>
    </location>
</feature>
<feature type="strand" evidence="4">
    <location>
        <begin position="143"/>
        <end position="148"/>
    </location>
</feature>
<feature type="strand" evidence="5">
    <location>
        <begin position="150"/>
        <end position="152"/>
    </location>
</feature>
<feature type="strand" evidence="4">
    <location>
        <begin position="156"/>
        <end position="162"/>
    </location>
</feature>
<feature type="helix" evidence="4">
    <location>
        <begin position="165"/>
        <end position="169"/>
    </location>
</feature>
<feature type="helix" evidence="4">
    <location>
        <begin position="171"/>
        <end position="178"/>
    </location>
</feature>
<feature type="helix" evidence="4">
    <location>
        <begin position="184"/>
        <end position="192"/>
    </location>
</feature>
<feature type="strand" evidence="4">
    <location>
        <begin position="202"/>
        <end position="207"/>
    </location>
</feature>
<feature type="helix" evidence="4">
    <location>
        <begin position="210"/>
        <end position="219"/>
    </location>
</feature>
<feature type="turn" evidence="6">
    <location>
        <begin position="222"/>
        <end position="224"/>
    </location>
</feature>
<feature type="helix" evidence="4">
    <location>
        <begin position="229"/>
        <end position="250"/>
    </location>
</feature>
<feature type="helix" evidence="4">
    <location>
        <begin position="255"/>
        <end position="258"/>
    </location>
</feature>
<feature type="helix" evidence="4">
    <location>
        <begin position="259"/>
        <end position="262"/>
    </location>
</feature>
<feature type="strand" evidence="4">
    <location>
        <begin position="276"/>
        <end position="278"/>
    </location>
</feature>
<feature type="helix" evidence="4">
    <location>
        <begin position="284"/>
        <end position="286"/>
    </location>
</feature>
<feature type="helix" evidence="4">
    <location>
        <begin position="288"/>
        <end position="292"/>
    </location>
</feature>
<feature type="helix" evidence="4">
    <location>
        <begin position="295"/>
        <end position="297"/>
    </location>
</feature>
<feature type="strand" evidence="10">
    <location>
        <begin position="302"/>
        <end position="304"/>
    </location>
</feature>
<feature type="helix" evidence="4">
    <location>
        <begin position="306"/>
        <end position="320"/>
    </location>
</feature>
<feature type="strand" evidence="4">
    <location>
        <begin position="323"/>
        <end position="328"/>
    </location>
</feature>
<feature type="helix" evidence="4">
    <location>
        <begin position="333"/>
        <end position="343"/>
    </location>
</feature>
<feature type="helix" evidence="4">
    <location>
        <begin position="344"/>
        <end position="346"/>
    </location>
</feature>
<feature type="strand" evidence="4">
    <location>
        <begin position="349"/>
        <end position="354"/>
    </location>
</feature>
<feature type="helix" evidence="4">
    <location>
        <begin position="357"/>
        <end position="372"/>
    </location>
</feature>
<keyword id="KW-0002">3D-structure</keyword>
<keyword id="KW-0067">ATP-binding</keyword>
<keyword id="KW-0237">DNA synthesis</keyword>
<keyword id="KW-0244">Early protein</keyword>
<keyword id="KW-0418">Kinase</keyword>
<keyword id="KW-0547">Nucleotide-binding</keyword>
<keyword id="KW-1185">Reference proteome</keyword>
<keyword id="KW-0808">Transferase</keyword>
<accession>P0DTH5</accession>
<accession>A0A5J6DX09</accession>
<accession>G8HBD6</accession>
<accession>P03176</accession>
<organism>
    <name type="scientific">Human herpesvirus 1 (strain 17)</name>
    <name type="common">HHV-1</name>
    <name type="synonym">Human herpes simplex virus 1</name>
    <dbReference type="NCBI Taxonomy" id="10299"/>
    <lineage>
        <taxon>Viruses</taxon>
        <taxon>Duplodnaviria</taxon>
        <taxon>Heunggongvirae</taxon>
        <taxon>Peploviricota</taxon>
        <taxon>Herviviricetes</taxon>
        <taxon>Herpesvirales</taxon>
        <taxon>Orthoherpesviridae</taxon>
        <taxon>Alphaherpesvirinae</taxon>
        <taxon>Simplexvirus</taxon>
        <taxon>Simplexvirus humanalpha1</taxon>
        <taxon>Human herpesvirus 1</taxon>
    </lineage>
</organism>
<name>KITH_HHV11</name>
<protein>
    <recommendedName>
        <fullName evidence="1">Thymidine kinase</fullName>
        <ecNumber evidence="1">2.7.1.21</ecNumber>
    </recommendedName>
</protein>
<dbReference type="EC" id="2.7.1.21" evidence="1"/>
<dbReference type="EMBL" id="X14112">
    <property type="protein sequence ID" value="CAA32315.1"/>
    <property type="molecule type" value="Genomic_DNA"/>
</dbReference>
<dbReference type="EMBL" id="JN555585">
    <property type="protein sequence ID" value="AEQ77053.1"/>
    <property type="molecule type" value="Genomic_DNA"/>
</dbReference>
<dbReference type="EMBL" id="MN159376">
    <property type="protein sequence ID" value="QEU44927.1"/>
    <property type="molecule type" value="Genomic_DNA"/>
</dbReference>
<dbReference type="EMBL" id="MN159377">
    <property type="protein sequence ID" value="QEU45002.1"/>
    <property type="molecule type" value="Genomic_DNA"/>
</dbReference>
<dbReference type="EMBL" id="MN159378">
    <property type="protein sequence ID" value="QEU45078.1"/>
    <property type="molecule type" value="Genomic_DNA"/>
</dbReference>
<dbReference type="EMBL" id="MN159379">
    <property type="protein sequence ID" value="QEU45154.1"/>
    <property type="molecule type" value="Genomic_DNA"/>
</dbReference>
<dbReference type="EMBL" id="MN159381">
    <property type="protein sequence ID" value="QEU45306.1"/>
    <property type="molecule type" value="Genomic_DNA"/>
</dbReference>
<dbReference type="EMBL" id="MN159382">
    <property type="protein sequence ID" value="QEU45382.1"/>
    <property type="molecule type" value="Genomic_DNA"/>
</dbReference>
<dbReference type="EMBL" id="BK012101">
    <property type="protein sequence ID" value="DAC85562.1"/>
    <property type="molecule type" value="Genomic_DNA"/>
</dbReference>
<dbReference type="PIR" id="E30084">
    <property type="entry name" value="KIBE17"/>
</dbReference>
<dbReference type="RefSeq" id="YP_009137097.1">
    <property type="nucleotide sequence ID" value="NC_001806.2"/>
</dbReference>
<dbReference type="PDB" id="1E2H">
    <property type="method" value="X-ray"/>
    <property type="resolution" value="1.90 A"/>
    <property type="chains" value="A/B=46-376"/>
</dbReference>
<dbReference type="PDB" id="1E2I">
    <property type="method" value="X-ray"/>
    <property type="resolution" value="1.90 A"/>
    <property type="chains" value="A/B=46-376"/>
</dbReference>
<dbReference type="PDB" id="1E2J">
    <property type="method" value="X-ray"/>
    <property type="resolution" value="2.50 A"/>
    <property type="chains" value="A/B=46-376"/>
</dbReference>
<dbReference type="PDB" id="1E2K">
    <property type="method" value="X-ray"/>
    <property type="resolution" value="1.70 A"/>
    <property type="chains" value="A/B=46-376"/>
</dbReference>
<dbReference type="PDB" id="1E2L">
    <property type="method" value="X-ray"/>
    <property type="resolution" value="2.40 A"/>
    <property type="chains" value="A/B=46-376"/>
</dbReference>
<dbReference type="PDB" id="1E2M">
    <property type="method" value="X-ray"/>
    <property type="resolution" value="2.20 A"/>
    <property type="chains" value="A/B=46-376"/>
</dbReference>
<dbReference type="PDB" id="1E2N">
    <property type="method" value="X-ray"/>
    <property type="resolution" value="2.20 A"/>
    <property type="chains" value="A/B=46-376"/>
</dbReference>
<dbReference type="PDB" id="1E2P">
    <property type="method" value="X-ray"/>
    <property type="resolution" value="2.50 A"/>
    <property type="chains" value="A/B=46-376"/>
</dbReference>
<dbReference type="PDB" id="1KI2">
    <property type="method" value="X-ray"/>
    <property type="resolution" value="2.20 A"/>
    <property type="chains" value="A/B=46-376"/>
</dbReference>
<dbReference type="PDB" id="1KI3">
    <property type="method" value="X-ray"/>
    <property type="resolution" value="2.37 A"/>
    <property type="chains" value="A/B=46-376"/>
</dbReference>
<dbReference type="PDB" id="1KI4">
    <property type="method" value="X-ray"/>
    <property type="resolution" value="2.34 A"/>
    <property type="chains" value="A/B=46-376"/>
</dbReference>
<dbReference type="PDB" id="1KI6">
    <property type="method" value="X-ray"/>
    <property type="resolution" value="2.37 A"/>
    <property type="chains" value="A/B=46-376"/>
</dbReference>
<dbReference type="PDB" id="1KI7">
    <property type="method" value="X-ray"/>
    <property type="resolution" value="2.20 A"/>
    <property type="chains" value="A/B=46-376"/>
</dbReference>
<dbReference type="PDB" id="1KI8">
    <property type="method" value="X-ray"/>
    <property type="resolution" value="2.20 A"/>
    <property type="chains" value="A/B=46-376"/>
</dbReference>
<dbReference type="PDB" id="1KIM">
    <property type="method" value="X-ray"/>
    <property type="resolution" value="2.14 A"/>
    <property type="chains" value="A/B=11-376"/>
</dbReference>
<dbReference type="PDB" id="1OF1">
    <property type="method" value="X-ray"/>
    <property type="resolution" value="1.95 A"/>
    <property type="chains" value="A/B=1-376"/>
</dbReference>
<dbReference type="PDB" id="1P7C">
    <property type="method" value="X-ray"/>
    <property type="resolution" value="2.10 A"/>
    <property type="chains" value="A/B=34-376"/>
</dbReference>
<dbReference type="PDB" id="1QHI">
    <property type="method" value="X-ray"/>
    <property type="resolution" value="1.90 A"/>
    <property type="chains" value="A/B=11-376"/>
</dbReference>
<dbReference type="PDB" id="1VTK">
    <property type="method" value="X-ray"/>
    <property type="resolution" value="2.75 A"/>
    <property type="chains" value="A=34-376"/>
</dbReference>
<dbReference type="PDB" id="2KI5">
    <property type="method" value="X-ray"/>
    <property type="resolution" value="1.90 A"/>
    <property type="chains" value="A/B=11-376"/>
</dbReference>
<dbReference type="PDB" id="2VTK">
    <property type="method" value="X-ray"/>
    <property type="resolution" value="2.80 A"/>
    <property type="chains" value="A=34-376"/>
</dbReference>
<dbReference type="PDB" id="3F0T">
    <property type="method" value="X-ray"/>
    <property type="resolution" value="2.00 A"/>
    <property type="chains" value="A/B=45-376"/>
</dbReference>
<dbReference type="PDB" id="3RDP">
    <property type="method" value="X-ray"/>
    <property type="resolution" value="2.80 A"/>
    <property type="chains" value="A/B=46-376"/>
</dbReference>
<dbReference type="PDB" id="3VTK">
    <property type="method" value="X-ray"/>
    <property type="resolution" value="3.00 A"/>
    <property type="chains" value="A=34-376"/>
</dbReference>
<dbReference type="PDB" id="4IVP">
    <property type="method" value="X-ray"/>
    <property type="resolution" value="2.10 A"/>
    <property type="chains" value="A/B=46-376"/>
</dbReference>
<dbReference type="PDB" id="4IVQ">
    <property type="method" value="X-ray"/>
    <property type="resolution" value="1.90 A"/>
    <property type="chains" value="A/B=46-376"/>
</dbReference>
<dbReference type="PDB" id="4IVR">
    <property type="method" value="X-ray"/>
    <property type="resolution" value="2.40 A"/>
    <property type="chains" value="A/B=46-376"/>
</dbReference>
<dbReference type="PDB" id="4JBX">
    <property type="method" value="X-ray"/>
    <property type="resolution" value="2.10 A"/>
    <property type="chains" value="A/B=45-376"/>
</dbReference>
<dbReference type="PDB" id="4JBY">
    <property type="method" value="X-ray"/>
    <property type="resolution" value="2.00 A"/>
    <property type="chains" value="A/B=45-376"/>
</dbReference>
<dbReference type="PDB" id="4OQL">
    <property type="method" value="X-ray"/>
    <property type="resolution" value="2.10 A"/>
    <property type="chains" value="A/B=45-376"/>
</dbReference>
<dbReference type="PDB" id="4OQM">
    <property type="method" value="X-ray"/>
    <property type="resolution" value="2.20 A"/>
    <property type="chains" value="A/B=45-376"/>
</dbReference>
<dbReference type="PDB" id="4OQN">
    <property type="method" value="X-ray"/>
    <property type="resolution" value="2.30 A"/>
    <property type="chains" value="A/B=45-376"/>
</dbReference>
<dbReference type="PDB" id="4OQX">
    <property type="method" value="X-ray"/>
    <property type="resolution" value="2.50 A"/>
    <property type="chains" value="A/B=45-376"/>
</dbReference>
<dbReference type="PDBsum" id="1E2H"/>
<dbReference type="PDBsum" id="1E2I"/>
<dbReference type="PDBsum" id="1E2J"/>
<dbReference type="PDBsum" id="1E2K"/>
<dbReference type="PDBsum" id="1E2L"/>
<dbReference type="PDBsum" id="1E2M"/>
<dbReference type="PDBsum" id="1E2N"/>
<dbReference type="PDBsum" id="1E2P"/>
<dbReference type="PDBsum" id="1KI2"/>
<dbReference type="PDBsum" id="1KI3"/>
<dbReference type="PDBsum" id="1KI4"/>
<dbReference type="PDBsum" id="1KI6"/>
<dbReference type="PDBsum" id="1KI7"/>
<dbReference type="PDBsum" id="1KI8"/>
<dbReference type="PDBsum" id="1KIM"/>
<dbReference type="PDBsum" id="1OF1"/>
<dbReference type="PDBsum" id="1P7C"/>
<dbReference type="PDBsum" id="1QHI"/>
<dbReference type="PDBsum" id="1VTK"/>
<dbReference type="PDBsum" id="2KI5"/>
<dbReference type="PDBsum" id="2VTK"/>
<dbReference type="PDBsum" id="3F0T"/>
<dbReference type="PDBsum" id="3RDP"/>
<dbReference type="PDBsum" id="3VTK"/>
<dbReference type="PDBsum" id="4IVP"/>
<dbReference type="PDBsum" id="4IVQ"/>
<dbReference type="PDBsum" id="4IVR"/>
<dbReference type="PDBsum" id="4JBX"/>
<dbReference type="PDBsum" id="4JBY"/>
<dbReference type="PDBsum" id="4OQL"/>
<dbReference type="PDBsum" id="4OQM"/>
<dbReference type="PDBsum" id="4OQN"/>
<dbReference type="PDBsum" id="4OQX"/>
<dbReference type="SMR" id="P0DTH5"/>
<dbReference type="GeneID" id="24271467"/>
<dbReference type="KEGG" id="vg:24271467"/>
<dbReference type="EvolutionaryTrace" id="P0DTH5"/>
<dbReference type="Proteomes" id="UP000009294">
    <property type="component" value="Segment"/>
</dbReference>
<dbReference type="Proteomes" id="UP000180758">
    <property type="component" value="Segment"/>
</dbReference>
<dbReference type="GO" id="GO:0005524">
    <property type="term" value="F:ATP binding"/>
    <property type="evidence" value="ECO:0007669"/>
    <property type="project" value="UniProtKB-KW"/>
</dbReference>
<dbReference type="GO" id="GO:0004797">
    <property type="term" value="F:thymidine kinase activity"/>
    <property type="evidence" value="ECO:0007669"/>
    <property type="project" value="UniProtKB-EC"/>
</dbReference>
<dbReference type="GO" id="GO:0071897">
    <property type="term" value="P:DNA biosynthetic process"/>
    <property type="evidence" value="ECO:0007669"/>
    <property type="project" value="UniProtKB-KW"/>
</dbReference>
<dbReference type="GO" id="GO:0006230">
    <property type="term" value="P:TMP biosynthetic process"/>
    <property type="evidence" value="ECO:0007669"/>
    <property type="project" value="InterPro"/>
</dbReference>
<dbReference type="Gene3D" id="3.40.50.300">
    <property type="entry name" value="P-loop containing nucleotide triphosphate hydrolases"/>
    <property type="match status" value="1"/>
</dbReference>
<dbReference type="HAMAP" id="MF_04029">
    <property type="entry name" value="HSV_KITH"/>
    <property type="match status" value="1"/>
</dbReference>
<dbReference type="InterPro" id="IPR001889">
    <property type="entry name" value="Herpes_TK"/>
</dbReference>
<dbReference type="InterPro" id="IPR027417">
    <property type="entry name" value="P-loop_NTPase"/>
</dbReference>
<dbReference type="Pfam" id="PF00693">
    <property type="entry name" value="Herpes_TK"/>
    <property type="match status" value="1"/>
</dbReference>
<dbReference type="SUPFAM" id="SSF52540">
    <property type="entry name" value="P-loop containing nucleoside triphosphate hydrolases"/>
    <property type="match status" value="1"/>
</dbReference>
<proteinExistence type="evidence at protein level"/>
<comment type="function">
    <text evidence="1">Catalyzes the transfer of the gamma-phospho group of ATP to thymidine to generate dTMP in the salvage pathway of pyrimidine synthesis. The dTMP serves as a substrate for DNA polymerase during viral DNA replication. Allows the virus to be reactivated and to grow in non-proliferative cells lacking a high concentration of phosphorylated nucleic acid precursors.</text>
</comment>
<comment type="catalytic activity">
    <reaction evidence="1 3">
        <text>thymidine + ATP = dTMP + ADP + H(+)</text>
        <dbReference type="Rhea" id="RHEA:19129"/>
        <dbReference type="ChEBI" id="CHEBI:15378"/>
        <dbReference type="ChEBI" id="CHEBI:17748"/>
        <dbReference type="ChEBI" id="CHEBI:30616"/>
        <dbReference type="ChEBI" id="CHEBI:63528"/>
        <dbReference type="ChEBI" id="CHEBI:456216"/>
        <dbReference type="EC" id="2.7.1.21"/>
    </reaction>
</comment>
<comment type="subunit">
    <text evidence="1 3">Homodimer.</text>
</comment>
<comment type="biotechnology">
    <text>Used in molecular biology as a selectable marker to identify transfected eukaryotic cells. Used in cancer suicide gene therapy to selectively kill transformed cells.</text>
</comment>
<comment type="miscellaneous">
    <text>Phosphorylates and thereby activates certain drugs like acyclovir (ACV), valacyclovir, and famciclovir to a toxic form, that leads to successful suppression of the infection, while the uninfected cell does not have this ability because it lacks TK. Mutations in thymidine kinase may induce HSV resistance to antiviral therapies in immunocompromised patients. The most frequently observed resistant strains are unable to express TK and are avirulent in animal models of disease. Resistance may be acquired less frequently by selecting variants which no longer recognize ACV or ACV triphosphate as substrates but which retain normal functions.</text>
</comment>
<comment type="similarity">
    <text evidence="1">Belongs to the herpesviridae thymidine kinase family.</text>
</comment>
<sequence length="376" mass="40921">MASYPCHQHASAFDQAARSRGHNNRRTALRPRRQQKATEVRLEQKMPTLLRVYIDGPHGMGKTTTTQLLVALGSRDDIVYVPEPMTYWRVLGASETIANIYTTQHRLDQGEISAGDAAVVMTSAQITMGMPYAVTDAVLAPHIGGEAGSSHAPPPALTLIFDRHPIAALLCYPAARYLMGSMTPQAVLAFVALIPPTLPGTNIVLGALPEDRHIDRLAKRQRPGERLDLAMLAAIRRVYGLLANTVRYLQGGGSWREDWGQLSGAAVPPQGAEPQSNAGPRPHIGDTLFTLFRAPELLAPNGDLYNVFAWALDVLAKRLRPMHVFILDYDQSPAGCRDALLQLTSGMVQTHVTTPGSIPTICDLARTFAREMGEAN</sequence>
<evidence type="ECO:0000255" key="1">
    <source>
        <dbReference type="HAMAP-Rule" id="MF_04029"/>
    </source>
</evidence>
<evidence type="ECO:0000256" key="2">
    <source>
        <dbReference type="SAM" id="MobiDB-lite"/>
    </source>
</evidence>
<evidence type="ECO:0000269" key="3">
    <source>
    </source>
</evidence>
<evidence type="ECO:0007829" key="4">
    <source>
        <dbReference type="PDB" id="1E2K"/>
    </source>
</evidence>
<evidence type="ECO:0007829" key="5">
    <source>
        <dbReference type="PDB" id="1KI2"/>
    </source>
</evidence>
<evidence type="ECO:0007829" key="6">
    <source>
        <dbReference type="PDB" id="1KI8"/>
    </source>
</evidence>
<evidence type="ECO:0007829" key="7">
    <source>
        <dbReference type="PDB" id="2KI5"/>
    </source>
</evidence>
<evidence type="ECO:0007829" key="8">
    <source>
        <dbReference type="PDB" id="2VTK"/>
    </source>
</evidence>
<evidence type="ECO:0007829" key="9">
    <source>
        <dbReference type="PDB" id="4IVP"/>
    </source>
</evidence>
<evidence type="ECO:0007829" key="10">
    <source>
        <dbReference type="PDB" id="4IVQ"/>
    </source>
</evidence>
<gene>
    <name evidence="1" type="primary">TK</name>
    <name type="ordered locus">UL23</name>
</gene>